<feature type="chain" id="PRO_0000079710" description="29 kDa cell wall protein">
    <location>
        <begin position="1"/>
        <end position="14" status="greater than"/>
    </location>
</feature>
<feature type="non-terminal residue" evidence="3 4">
    <location>
        <position position="14"/>
    </location>
</feature>
<keyword id="KW-0134">Cell wall</keyword>
<keyword id="KW-0903">Direct protein sequencing</keyword>
<keyword id="KW-1185">Reference proteome</keyword>
<keyword id="KW-0964">Secreted</keyword>
<proteinExistence type="evidence at protein level"/>
<name>CWP27_TOBAC</name>
<sequence>GYPRKTVDVFTFTN</sequence>
<accession>P82435</accession>
<accession>P80794</accession>
<organism>
    <name type="scientific">Nicotiana tabacum</name>
    <name type="common">Common tobacco</name>
    <dbReference type="NCBI Taxonomy" id="4097"/>
    <lineage>
        <taxon>Eukaryota</taxon>
        <taxon>Viridiplantae</taxon>
        <taxon>Streptophyta</taxon>
        <taxon>Embryophyta</taxon>
        <taxon>Tracheophyta</taxon>
        <taxon>Spermatophyta</taxon>
        <taxon>Magnoliopsida</taxon>
        <taxon>eudicotyledons</taxon>
        <taxon>Gunneridae</taxon>
        <taxon>Pentapetalae</taxon>
        <taxon>asterids</taxon>
        <taxon>lamiids</taxon>
        <taxon>Solanales</taxon>
        <taxon>Solanaceae</taxon>
        <taxon>Nicotianoideae</taxon>
        <taxon>Nicotianeae</taxon>
        <taxon>Nicotiana</taxon>
    </lineage>
</organism>
<evidence type="ECO:0000269" key="1">
    <source>
    </source>
</evidence>
<evidence type="ECO:0000269" key="2">
    <source>
    </source>
</evidence>
<evidence type="ECO:0000303" key="3">
    <source>
    </source>
</evidence>
<evidence type="ECO:0000303" key="4">
    <source>
    </source>
</evidence>
<evidence type="ECO:0000305" key="5"/>
<comment type="subcellular location">
    <subcellularLocation>
        <location evidence="1 2">Secreted</location>
        <location evidence="1 2">Cell wall</location>
    </subcellularLocation>
</comment>
<dbReference type="PaxDb" id="4097-P82435"/>
<dbReference type="Proteomes" id="UP000084051">
    <property type="component" value="Unplaced"/>
</dbReference>
<dbReference type="GO" id="GO:0005576">
    <property type="term" value="C:extracellular region"/>
    <property type="evidence" value="ECO:0007669"/>
    <property type="project" value="UniProtKB-KW"/>
</dbReference>
<reference evidence="5" key="1">
    <citation type="journal article" date="1997" name="J. Biol. Chem.">
        <title>Differential extraction and protein sequencing reveals major differences in patterns of primary cell wall proteins from plants.</title>
        <authorList>
            <person name="Robertson D."/>
            <person name="Mitchell G.P."/>
            <person name="Gilroy J.S."/>
            <person name="Gerrish C."/>
            <person name="Bolwell G.P."/>
            <person name="Slabas A.R."/>
        </authorList>
    </citation>
    <scope>PROTEIN SEQUENCE</scope>
    <scope>SUBCELLULAR LOCATION</scope>
</reference>
<reference evidence="5" key="2">
    <citation type="journal article" date="2001" name="Planta">
        <title>Proteomic analysis reveals a novel set of cell wall proteins in a transformed tobacco cell culture that synthesises secondary walls as determined by biochemical and morphological parameters.</title>
        <authorList>
            <person name="Blee K.A."/>
            <person name="Wheatley E.R."/>
            <person name="Bonham V.A."/>
            <person name="Mitchell G.P."/>
            <person name="Robertson D."/>
            <person name="Slabas A.R."/>
            <person name="Burrell M.M."/>
            <person name="Wojtaszek P."/>
            <person name="Bolwell G.P."/>
        </authorList>
    </citation>
    <scope>PROTEIN SEQUENCE</scope>
    <scope>SUBCELLULAR LOCATION</scope>
    <source>
        <strain evidence="1">cv. Petit Havana</strain>
    </source>
</reference>
<protein>
    <recommendedName>
        <fullName>29 kDa cell wall protein</fullName>
    </recommendedName>
    <alternativeName>
        <fullName>27 kDa cell wall protein</fullName>
    </alternativeName>
</protein>